<keyword id="KW-0456">Lyase</keyword>
<keyword id="KW-0460">Magnesium</keyword>
<keyword id="KW-0479">Metal-binding</keyword>
<keyword id="KW-1185">Reference proteome</keyword>
<gene>
    <name type="primary">TPS6</name>
    <name type="ORF">RCOM_1574750</name>
</gene>
<feature type="chain" id="PRO_0000422204" description="Probable terpene synthase 6">
    <location>
        <begin position="1"/>
        <end position="555"/>
    </location>
</feature>
<feature type="short sequence motif" description="DDXXD motif">
    <location>
        <begin position="309"/>
        <end position="313"/>
    </location>
</feature>
<feature type="binding site" evidence="1">
    <location>
        <position position="309"/>
    </location>
    <ligand>
        <name>Mg(2+)</name>
        <dbReference type="ChEBI" id="CHEBI:18420"/>
        <label>1</label>
    </ligand>
</feature>
<feature type="binding site" evidence="1">
    <location>
        <position position="309"/>
    </location>
    <ligand>
        <name>Mg(2+)</name>
        <dbReference type="ChEBI" id="CHEBI:18420"/>
        <label>2</label>
    </ligand>
</feature>
<feature type="binding site" evidence="1">
    <location>
        <position position="313"/>
    </location>
    <ligand>
        <name>Mg(2+)</name>
        <dbReference type="ChEBI" id="CHEBI:18420"/>
        <label>1</label>
    </ligand>
</feature>
<feature type="binding site" evidence="1">
    <location>
        <position position="313"/>
    </location>
    <ligand>
        <name>Mg(2+)</name>
        <dbReference type="ChEBI" id="CHEBI:18420"/>
        <label>2</label>
    </ligand>
</feature>
<feature type="binding site" evidence="1">
    <location>
        <position position="460"/>
    </location>
    <ligand>
        <name>Mg(2+)</name>
        <dbReference type="ChEBI" id="CHEBI:18420"/>
        <label>3</label>
    </ligand>
</feature>
<reference key="1">
    <citation type="journal article" date="2010" name="Nat. Biotechnol.">
        <title>Draft genome sequence of the oilseed species Ricinus communis.</title>
        <authorList>
            <person name="Chan A.P."/>
            <person name="Crabtree J."/>
            <person name="Zhao Q."/>
            <person name="Lorenzi H."/>
            <person name="Orvis J."/>
            <person name="Puiu D."/>
            <person name="Melake-Berhan A."/>
            <person name="Jones K.M."/>
            <person name="Redman J."/>
            <person name="Chen G."/>
            <person name="Cahoon E.B."/>
            <person name="Gedil M."/>
            <person name="Stanke M."/>
            <person name="Haas B.J."/>
            <person name="Wortman J.R."/>
            <person name="Fraser-Liggett C.M."/>
            <person name="Ravel J."/>
            <person name="Rabinowicz P.D."/>
        </authorList>
    </citation>
    <scope>NUCLEOTIDE SEQUENCE [LARGE SCALE GENOMIC DNA]</scope>
    <source>
        <strain>cv. Hale</strain>
    </source>
</reference>
<reference key="2">
    <citation type="journal article" date="2012" name="Phytochemistry">
        <title>Functional characterization of four sesquiterpene synthases from Ricinus communis (castor bean).</title>
        <authorList>
            <person name="Xie X."/>
            <person name="Kirby J."/>
            <person name="Keasling J.D."/>
        </authorList>
    </citation>
    <scope>GENE NAME</scope>
</reference>
<dbReference type="EC" id="4.2.3.-"/>
<dbReference type="EMBL" id="EQ973781">
    <property type="protein sequence ID" value="EEF48772.1"/>
    <property type="molecule type" value="Genomic_DNA"/>
</dbReference>
<dbReference type="SMR" id="B9RI00"/>
<dbReference type="FunCoup" id="B9RI00">
    <property type="interactions" value="11"/>
</dbReference>
<dbReference type="STRING" id="3988.B9RI00"/>
<dbReference type="eggNOG" id="ENOG502SHPY">
    <property type="taxonomic scope" value="Eukaryota"/>
</dbReference>
<dbReference type="InParanoid" id="B9RI00"/>
<dbReference type="Proteomes" id="UP000008311">
    <property type="component" value="Unassembled WGS sequence"/>
</dbReference>
<dbReference type="GO" id="GO:0000287">
    <property type="term" value="F:magnesium ion binding"/>
    <property type="evidence" value="ECO:0007669"/>
    <property type="project" value="InterPro"/>
</dbReference>
<dbReference type="GO" id="GO:0010333">
    <property type="term" value="F:terpene synthase activity"/>
    <property type="evidence" value="ECO:0007669"/>
    <property type="project" value="InterPro"/>
</dbReference>
<dbReference type="GO" id="GO:0016102">
    <property type="term" value="P:diterpenoid biosynthetic process"/>
    <property type="evidence" value="ECO:0007669"/>
    <property type="project" value="InterPro"/>
</dbReference>
<dbReference type="GO" id="GO:0120251">
    <property type="term" value="P:hydrocarbon biosynthetic process"/>
    <property type="evidence" value="ECO:0007669"/>
    <property type="project" value="UniProtKB-ARBA"/>
</dbReference>
<dbReference type="CDD" id="cd00684">
    <property type="entry name" value="Terpene_cyclase_plant_C1"/>
    <property type="match status" value="1"/>
</dbReference>
<dbReference type="FunFam" id="1.10.600.10:FF:000007">
    <property type="entry name" value="Isoprene synthase, chloroplastic"/>
    <property type="match status" value="1"/>
</dbReference>
<dbReference type="FunFam" id="1.50.10.130:FF:000001">
    <property type="entry name" value="Isoprene synthase, chloroplastic"/>
    <property type="match status" value="1"/>
</dbReference>
<dbReference type="Gene3D" id="1.10.600.10">
    <property type="entry name" value="Farnesyl Diphosphate Synthase"/>
    <property type="match status" value="1"/>
</dbReference>
<dbReference type="Gene3D" id="1.50.10.130">
    <property type="entry name" value="Terpene synthase, N-terminal domain"/>
    <property type="match status" value="1"/>
</dbReference>
<dbReference type="InterPro" id="IPR008949">
    <property type="entry name" value="Isoprenoid_synthase_dom_sf"/>
</dbReference>
<dbReference type="InterPro" id="IPR034741">
    <property type="entry name" value="Terpene_cyclase-like_1_C"/>
</dbReference>
<dbReference type="InterPro" id="IPR044814">
    <property type="entry name" value="Terpene_cyclase_plant_C1"/>
</dbReference>
<dbReference type="InterPro" id="IPR001906">
    <property type="entry name" value="Terpene_synth_N"/>
</dbReference>
<dbReference type="InterPro" id="IPR036965">
    <property type="entry name" value="Terpene_synth_N_sf"/>
</dbReference>
<dbReference type="InterPro" id="IPR050148">
    <property type="entry name" value="Terpene_synthase-like"/>
</dbReference>
<dbReference type="InterPro" id="IPR005630">
    <property type="entry name" value="Terpene_synthase_metal-bd"/>
</dbReference>
<dbReference type="InterPro" id="IPR008930">
    <property type="entry name" value="Terpenoid_cyclase/PrenylTrfase"/>
</dbReference>
<dbReference type="PANTHER" id="PTHR31225">
    <property type="entry name" value="OS04G0344100 PROTEIN-RELATED"/>
    <property type="match status" value="1"/>
</dbReference>
<dbReference type="PANTHER" id="PTHR31225:SF231">
    <property type="entry name" value="TERPENE SYNTHASE 6-RELATED"/>
    <property type="match status" value="1"/>
</dbReference>
<dbReference type="Pfam" id="PF01397">
    <property type="entry name" value="Terpene_synth"/>
    <property type="match status" value="1"/>
</dbReference>
<dbReference type="Pfam" id="PF03936">
    <property type="entry name" value="Terpene_synth_C"/>
    <property type="match status" value="1"/>
</dbReference>
<dbReference type="SFLD" id="SFLDS00005">
    <property type="entry name" value="Isoprenoid_Synthase_Type_I"/>
    <property type="match status" value="1"/>
</dbReference>
<dbReference type="SFLD" id="SFLDG01019">
    <property type="entry name" value="Terpene_Cyclase_Like_1_C_Termi"/>
    <property type="match status" value="1"/>
</dbReference>
<dbReference type="SUPFAM" id="SSF48239">
    <property type="entry name" value="Terpenoid cyclases/Protein prenyltransferases"/>
    <property type="match status" value="1"/>
</dbReference>
<dbReference type="SUPFAM" id="SSF48576">
    <property type="entry name" value="Terpenoid synthases"/>
    <property type="match status" value="1"/>
</dbReference>
<evidence type="ECO:0000250" key="1"/>
<evidence type="ECO:0000305" key="2"/>
<evidence type="ECO:0000305" key="3">
    <source>
    </source>
</evidence>
<organism>
    <name type="scientific">Ricinus communis</name>
    <name type="common">Castor bean</name>
    <dbReference type="NCBI Taxonomy" id="3988"/>
    <lineage>
        <taxon>Eukaryota</taxon>
        <taxon>Viridiplantae</taxon>
        <taxon>Streptophyta</taxon>
        <taxon>Embryophyta</taxon>
        <taxon>Tracheophyta</taxon>
        <taxon>Spermatophyta</taxon>
        <taxon>Magnoliopsida</taxon>
        <taxon>eudicotyledons</taxon>
        <taxon>Gunneridae</taxon>
        <taxon>Pentapetalae</taxon>
        <taxon>rosids</taxon>
        <taxon>fabids</taxon>
        <taxon>Malpighiales</taxon>
        <taxon>Euphorbiaceae</taxon>
        <taxon>Acalyphoideae</taxon>
        <taxon>Acalypheae</taxon>
        <taxon>Ricinus</taxon>
    </lineage>
</organism>
<proteinExistence type="inferred from homology"/>
<accession>B9RI00</accession>
<protein>
    <recommendedName>
        <fullName>Probable terpene synthase 6</fullName>
        <shortName>RcSeTPS6</shortName>
        <ecNumber>4.2.3.-</ecNumber>
    </recommendedName>
</protein>
<name>TPS6_RICCO</name>
<sequence>MAEKDKYRPLANFPSTAWGCSFASFSSSNSDFELYTREVETLKEKVRPMVTASTKDPLENVQIINLLYRLGVSYHFENEITDQLNHIFEIIPNHIISDDNDYDLYTVAILFQILRQYGHKVPCDVFNKFKNSDGKFKKSIANDLKGLLSLYEASFLSVHGENILDEAIAFTRPLLESFADQSSPHLAKYIRNSLLRPHHQGIQRVEARQYISFYEEDESRNETLLKFAKLDFNRLQLLHKQELASLSRYKKYIAQIIIWEDLNLAKELPYIRDRLVETYLWAIGAHFEPQYALSRAIIAKYTTIVSAVDDTYDAYGTLDELQRFTNAFQRCDIDAIDELPDYMKVLYRALLNFFDQIEDEVDEGRSYSTSVAKEAFKELVRSYYVEAQWFSDGYVPSFDEYMRNGLITSTYTVLPAASFIGMENTVGEKEYKWVQSNPKIVKAAKIICRLMDDITTHEDEQKRGHCASSIECYMKEYGVSEKKAIEEIQKICANAWKDMNEECMKKPPTVSRTLLKYYVNLARVIDFVYKNLDSYTYASSLKGDITTVFLELLPV</sequence>
<comment type="function">
    <text evidence="1">Probable sesquiterpene synthase.</text>
</comment>
<comment type="cofactor">
    <cofactor evidence="1">
        <name>Mg(2+)</name>
        <dbReference type="ChEBI" id="CHEBI:18420"/>
    </cofactor>
    <text evidence="1">Binds 3 Mg(2+) ions per subunit.</text>
</comment>
<comment type="domain">
    <text evidence="1">The Asp-Asp-Xaa-Xaa-Asp/Glu (DDXXD/E) motif is important for the catalytic activity, presumably through binding to Mg(2+).</text>
</comment>
<comment type="miscellaneous">
    <text evidence="3">Does not produce any detectable product when tested in vitro.</text>
</comment>
<comment type="similarity">
    <text evidence="2">Belongs to the terpene synthase family.</text>
</comment>